<organism>
    <name type="scientific">Blochmanniella pennsylvanica (strain BPEN)</name>
    <dbReference type="NCBI Taxonomy" id="291272"/>
    <lineage>
        <taxon>Bacteria</taxon>
        <taxon>Pseudomonadati</taxon>
        <taxon>Pseudomonadota</taxon>
        <taxon>Gammaproteobacteria</taxon>
        <taxon>Enterobacterales</taxon>
        <taxon>Enterobacteriaceae</taxon>
        <taxon>ant endosymbionts</taxon>
        <taxon>Candidatus Blochmanniella</taxon>
    </lineage>
</organism>
<gene>
    <name evidence="1" type="primary">aspS</name>
    <name type="ordered locus">BPEN_467</name>
</gene>
<protein>
    <recommendedName>
        <fullName evidence="1">Aspartate--tRNA ligase</fullName>
        <ecNumber evidence="1">6.1.1.12</ecNumber>
    </recommendedName>
    <alternativeName>
        <fullName evidence="1">Aspartyl-tRNA synthetase</fullName>
        <shortName evidence="1">AspRS</shortName>
    </alternativeName>
</protein>
<proteinExistence type="inferred from homology"/>
<name>SYD_BLOPB</name>
<accession>Q492L1</accession>
<reference key="1">
    <citation type="journal article" date="2005" name="Genome Res.">
        <title>Genome sequence of Blochmannia pennsylvanicus indicates parallel evolutionary trends among bacterial mutualists of insects.</title>
        <authorList>
            <person name="Degnan P.H."/>
            <person name="Lazarus A.B."/>
            <person name="Wernegreen J.J."/>
        </authorList>
    </citation>
    <scope>NUCLEOTIDE SEQUENCE [LARGE SCALE GENOMIC DNA]</scope>
    <source>
        <strain>BPEN</strain>
    </source>
</reference>
<comment type="function">
    <text evidence="1">Catalyzes the attachment of L-aspartate to tRNA(Asp) in a two-step reaction: L-aspartate is first activated by ATP to form Asp-AMP and then transferred to the acceptor end of tRNA(Asp).</text>
</comment>
<comment type="catalytic activity">
    <reaction evidence="1">
        <text>tRNA(Asp) + L-aspartate + ATP = L-aspartyl-tRNA(Asp) + AMP + diphosphate</text>
        <dbReference type="Rhea" id="RHEA:19649"/>
        <dbReference type="Rhea" id="RHEA-COMP:9660"/>
        <dbReference type="Rhea" id="RHEA-COMP:9678"/>
        <dbReference type="ChEBI" id="CHEBI:29991"/>
        <dbReference type="ChEBI" id="CHEBI:30616"/>
        <dbReference type="ChEBI" id="CHEBI:33019"/>
        <dbReference type="ChEBI" id="CHEBI:78442"/>
        <dbReference type="ChEBI" id="CHEBI:78516"/>
        <dbReference type="ChEBI" id="CHEBI:456215"/>
        <dbReference type="EC" id="6.1.1.12"/>
    </reaction>
</comment>
<comment type="subunit">
    <text evidence="1">Homodimer.</text>
</comment>
<comment type="subcellular location">
    <subcellularLocation>
        <location evidence="1">Cytoplasm</location>
    </subcellularLocation>
</comment>
<comment type="similarity">
    <text evidence="1">Belongs to the class-II aminoacyl-tRNA synthetase family. Type 1 subfamily.</text>
</comment>
<keyword id="KW-0030">Aminoacyl-tRNA synthetase</keyword>
<keyword id="KW-0067">ATP-binding</keyword>
<keyword id="KW-0963">Cytoplasm</keyword>
<keyword id="KW-0436">Ligase</keyword>
<keyword id="KW-0547">Nucleotide-binding</keyword>
<keyword id="KW-0648">Protein biosynthesis</keyword>
<keyword id="KW-1185">Reference proteome</keyword>
<evidence type="ECO:0000255" key="1">
    <source>
        <dbReference type="HAMAP-Rule" id="MF_00044"/>
    </source>
</evidence>
<feature type="chain" id="PRO_0000235509" description="Aspartate--tRNA ligase">
    <location>
        <begin position="1"/>
        <end position="574"/>
    </location>
</feature>
<feature type="region of interest" description="Aspartate" evidence="1">
    <location>
        <begin position="196"/>
        <end position="199"/>
    </location>
</feature>
<feature type="binding site" evidence="1">
    <location>
        <position position="172"/>
    </location>
    <ligand>
        <name>L-aspartate</name>
        <dbReference type="ChEBI" id="CHEBI:29991"/>
    </ligand>
</feature>
<feature type="binding site" evidence="1">
    <location>
        <begin position="218"/>
        <end position="220"/>
    </location>
    <ligand>
        <name>ATP</name>
        <dbReference type="ChEBI" id="CHEBI:30616"/>
    </ligand>
</feature>
<feature type="binding site" evidence="1">
    <location>
        <position position="218"/>
    </location>
    <ligand>
        <name>L-aspartate</name>
        <dbReference type="ChEBI" id="CHEBI:29991"/>
    </ligand>
</feature>
<feature type="binding site" evidence="1">
    <location>
        <position position="227"/>
    </location>
    <ligand>
        <name>ATP</name>
        <dbReference type="ChEBI" id="CHEBI:30616"/>
    </ligand>
</feature>
<feature type="binding site" evidence="1">
    <location>
        <position position="453"/>
    </location>
    <ligand>
        <name>L-aspartate</name>
        <dbReference type="ChEBI" id="CHEBI:29991"/>
    </ligand>
</feature>
<feature type="binding site" evidence="1">
    <location>
        <position position="487"/>
    </location>
    <ligand>
        <name>ATP</name>
        <dbReference type="ChEBI" id="CHEBI:30616"/>
    </ligand>
</feature>
<feature type="binding site" evidence="1">
    <location>
        <position position="494"/>
    </location>
    <ligand>
        <name>L-aspartate</name>
        <dbReference type="ChEBI" id="CHEBI:29991"/>
    </ligand>
</feature>
<feature type="binding site" evidence="1">
    <location>
        <begin position="539"/>
        <end position="542"/>
    </location>
    <ligand>
        <name>ATP</name>
        <dbReference type="ChEBI" id="CHEBI:30616"/>
    </ligand>
</feature>
<sequence length="574" mass="66034">MRTAYCGQLNLSHVGLEVTLCGWINKYRNFGGLIFIDLRDREGCIQVCFDVYQNKEVCISAAKLKQEFCIQLIGMVRARPKNQINSNISTGAVEVVAKKFSILNISDPLPLDISKNNIEENRLKYRYLDLRRSIMFDRIKTRSRIMSIVHRFMELEGFLNIETPMLTKVTPEGSRDYIVPSRLHAGKNYALPQSPQIFKQLLMVSGFDRYYQITKCFRDEDLRADRQPEFTQIDIETSFMTTQKIRELMEIFIRIIWREILNVELGVFSQFTYSEVMQRFGSDAPDLRNPIEMFDVSYLFNSTQNRLSFIRANNIGVQAIAMKVPNGRQLTQKQIDEYIYYSKQCGLKELLWVKVQFSDNDITKKEIQGSVTNFIDNLTLDIILNKTNIKSNDILFVGFNDNKNQFITKMLSALRLKLGNDLCLIKKDSWAPLWIIDFPMFKKNCHGEYTSMHHMFTSPKNCDVQMLKKDPLLVISEAYDMVINGCEIGSGSARIHSFDMQQAVFNILGITQNDQKKKFGYFMDALKYGAPPHAGLAFGLDRIAMLLTGSKNIREVIAFPKTTASVDIMANAPD</sequence>
<dbReference type="EC" id="6.1.1.12" evidence="1"/>
<dbReference type="EMBL" id="CP000016">
    <property type="protein sequence ID" value="AAZ41086.1"/>
    <property type="molecule type" value="Genomic_DNA"/>
</dbReference>
<dbReference type="SMR" id="Q492L1"/>
<dbReference type="STRING" id="291272.BPEN_467"/>
<dbReference type="KEGG" id="bpn:BPEN_467"/>
<dbReference type="eggNOG" id="COG0173">
    <property type="taxonomic scope" value="Bacteria"/>
</dbReference>
<dbReference type="HOGENOM" id="CLU_014330_3_2_6"/>
<dbReference type="OrthoDB" id="9802326at2"/>
<dbReference type="Proteomes" id="UP000007794">
    <property type="component" value="Chromosome"/>
</dbReference>
<dbReference type="GO" id="GO:0005737">
    <property type="term" value="C:cytoplasm"/>
    <property type="evidence" value="ECO:0007669"/>
    <property type="project" value="UniProtKB-SubCell"/>
</dbReference>
<dbReference type="GO" id="GO:0004815">
    <property type="term" value="F:aspartate-tRNA ligase activity"/>
    <property type="evidence" value="ECO:0007669"/>
    <property type="project" value="UniProtKB-UniRule"/>
</dbReference>
<dbReference type="GO" id="GO:0005524">
    <property type="term" value="F:ATP binding"/>
    <property type="evidence" value="ECO:0007669"/>
    <property type="project" value="UniProtKB-UniRule"/>
</dbReference>
<dbReference type="GO" id="GO:0003676">
    <property type="term" value="F:nucleic acid binding"/>
    <property type="evidence" value="ECO:0007669"/>
    <property type="project" value="InterPro"/>
</dbReference>
<dbReference type="GO" id="GO:0006422">
    <property type="term" value="P:aspartyl-tRNA aminoacylation"/>
    <property type="evidence" value="ECO:0007669"/>
    <property type="project" value="UniProtKB-UniRule"/>
</dbReference>
<dbReference type="CDD" id="cd00777">
    <property type="entry name" value="AspRS_core"/>
    <property type="match status" value="1"/>
</dbReference>
<dbReference type="CDD" id="cd04317">
    <property type="entry name" value="EcAspRS_like_N"/>
    <property type="match status" value="1"/>
</dbReference>
<dbReference type="Gene3D" id="3.30.930.10">
    <property type="entry name" value="Bira Bifunctional Protein, Domain 2"/>
    <property type="match status" value="1"/>
</dbReference>
<dbReference type="Gene3D" id="3.30.1360.30">
    <property type="entry name" value="GAD-like domain"/>
    <property type="match status" value="1"/>
</dbReference>
<dbReference type="Gene3D" id="2.40.50.140">
    <property type="entry name" value="Nucleic acid-binding proteins"/>
    <property type="match status" value="1"/>
</dbReference>
<dbReference type="HAMAP" id="MF_00044">
    <property type="entry name" value="Asp_tRNA_synth_type1"/>
    <property type="match status" value="1"/>
</dbReference>
<dbReference type="InterPro" id="IPR004364">
    <property type="entry name" value="Aa-tRNA-synt_II"/>
</dbReference>
<dbReference type="InterPro" id="IPR006195">
    <property type="entry name" value="aa-tRNA-synth_II"/>
</dbReference>
<dbReference type="InterPro" id="IPR045864">
    <property type="entry name" value="aa-tRNA-synth_II/BPL/LPL"/>
</dbReference>
<dbReference type="InterPro" id="IPR004524">
    <property type="entry name" value="Asp-tRNA-ligase_1"/>
</dbReference>
<dbReference type="InterPro" id="IPR047089">
    <property type="entry name" value="Asp-tRNA-ligase_1_N"/>
</dbReference>
<dbReference type="InterPro" id="IPR002312">
    <property type="entry name" value="Asp/Asn-tRNA-synth_IIb"/>
</dbReference>
<dbReference type="InterPro" id="IPR047090">
    <property type="entry name" value="AspRS_core"/>
</dbReference>
<dbReference type="InterPro" id="IPR004115">
    <property type="entry name" value="GAD-like_sf"/>
</dbReference>
<dbReference type="InterPro" id="IPR029351">
    <property type="entry name" value="GAD_dom"/>
</dbReference>
<dbReference type="InterPro" id="IPR012340">
    <property type="entry name" value="NA-bd_OB-fold"/>
</dbReference>
<dbReference type="InterPro" id="IPR004365">
    <property type="entry name" value="NA-bd_OB_tRNA"/>
</dbReference>
<dbReference type="NCBIfam" id="TIGR00459">
    <property type="entry name" value="aspS_bact"/>
    <property type="match status" value="1"/>
</dbReference>
<dbReference type="NCBIfam" id="NF001750">
    <property type="entry name" value="PRK00476.1"/>
    <property type="match status" value="1"/>
</dbReference>
<dbReference type="PANTHER" id="PTHR22594:SF5">
    <property type="entry name" value="ASPARTATE--TRNA LIGASE, MITOCHONDRIAL"/>
    <property type="match status" value="1"/>
</dbReference>
<dbReference type="PANTHER" id="PTHR22594">
    <property type="entry name" value="ASPARTYL/LYSYL-TRNA SYNTHETASE"/>
    <property type="match status" value="1"/>
</dbReference>
<dbReference type="Pfam" id="PF02938">
    <property type="entry name" value="GAD"/>
    <property type="match status" value="1"/>
</dbReference>
<dbReference type="Pfam" id="PF00152">
    <property type="entry name" value="tRNA-synt_2"/>
    <property type="match status" value="1"/>
</dbReference>
<dbReference type="Pfam" id="PF01336">
    <property type="entry name" value="tRNA_anti-codon"/>
    <property type="match status" value="1"/>
</dbReference>
<dbReference type="PRINTS" id="PR01042">
    <property type="entry name" value="TRNASYNTHASP"/>
</dbReference>
<dbReference type="SUPFAM" id="SSF55681">
    <property type="entry name" value="Class II aaRS and biotin synthetases"/>
    <property type="match status" value="1"/>
</dbReference>
<dbReference type="SUPFAM" id="SSF55261">
    <property type="entry name" value="GAD domain-like"/>
    <property type="match status" value="1"/>
</dbReference>
<dbReference type="SUPFAM" id="SSF50249">
    <property type="entry name" value="Nucleic acid-binding proteins"/>
    <property type="match status" value="1"/>
</dbReference>
<dbReference type="PROSITE" id="PS50862">
    <property type="entry name" value="AA_TRNA_LIGASE_II"/>
    <property type="match status" value="1"/>
</dbReference>